<keyword id="KW-0963">Cytoplasm</keyword>
<keyword id="KW-0342">GTP-binding</keyword>
<keyword id="KW-0378">Hydrolase</keyword>
<keyword id="KW-0460">Magnesium</keyword>
<keyword id="KW-0479">Metal-binding</keyword>
<keyword id="KW-0547">Nucleotide-binding</keyword>
<reference key="1">
    <citation type="submission" date="2008-02" db="EMBL/GenBank/DDBJ databases">
        <title>Genome sequence of Ureaplasma parvum serovar 3.</title>
        <authorList>
            <person name="Methe B.A."/>
            <person name="Glass J."/>
            <person name="Waites K."/>
            <person name="Shrivastava S."/>
        </authorList>
    </citation>
    <scope>NUCLEOTIDE SEQUENCE [LARGE SCALE GENOMIC DNA]</scope>
    <source>
        <strain>ATCC 27815 / 27 / NCTC 11736</strain>
    </source>
</reference>
<sequence length="435" mass="48696">MAFIDKCKIVLIAGNGGDGIVSWRRETHVPEGGPAGGNGGNGGSIWFVGNHNETSLEFLKYKKIIRAKHGEKGDIKNQHGANAEDVFINVPLGTVVYNPITNEILADINIDQQKYLVAQGGLGGHGNTHFKSPFNKAPNLYELGELGENVEVLLELKTIADIGIIGLPNAGKSTLISTFTNAKPKTANYMFTTLNPVLGTIYRDQNRIIFADIPGLIEGAHTGVGLGHDFLKHIERCFLLIHLISLDPNDNPDIINAYETIVNELKQYKQNLVNKPIVLVANKIDQIGALENLQILKEYLKNNQEIKIISALTNLHVDNMLDDVIKIYFAQKKIYEQRLKEQLPVDQILKWTSDIPKSKELDKTIEIIKVDDHIFEVFGEYLKYWAHRIPLKTQDNLIRFNQKLQSINFNQQLLQAGAVAGDSIKIYDITLEFEE</sequence>
<comment type="function">
    <text evidence="1">An essential GTPase which binds GTP, GDP and possibly (p)ppGpp with moderate affinity, with high nucleotide exchange rates and a fairly low GTP hydrolysis rate. Plays a role in control of the cell cycle, stress response, ribosome biogenesis and in those bacteria that undergo differentiation, in morphogenesis control.</text>
</comment>
<comment type="cofactor">
    <cofactor evidence="1">
        <name>Mg(2+)</name>
        <dbReference type="ChEBI" id="CHEBI:18420"/>
    </cofactor>
</comment>
<comment type="subunit">
    <text evidence="1">Monomer.</text>
</comment>
<comment type="subcellular location">
    <subcellularLocation>
        <location evidence="1">Cytoplasm</location>
    </subcellularLocation>
</comment>
<comment type="similarity">
    <text evidence="1">Belongs to the TRAFAC class OBG-HflX-like GTPase superfamily. OBG GTPase family.</text>
</comment>
<evidence type="ECO:0000255" key="1">
    <source>
        <dbReference type="HAMAP-Rule" id="MF_01454"/>
    </source>
</evidence>
<evidence type="ECO:0000255" key="2">
    <source>
        <dbReference type="PROSITE-ProRule" id="PRU01229"/>
    </source>
</evidence>
<evidence type="ECO:0000255" key="3">
    <source>
        <dbReference type="PROSITE-ProRule" id="PRU01231"/>
    </source>
</evidence>
<proteinExistence type="inferred from homology"/>
<accession>B1AJA2</accession>
<protein>
    <recommendedName>
        <fullName evidence="1">GTPase Obg</fullName>
        <ecNumber evidence="1">3.6.5.-</ecNumber>
    </recommendedName>
    <alternativeName>
        <fullName evidence="1">GTP-binding protein Obg</fullName>
    </alternativeName>
</protein>
<gene>
    <name evidence="1" type="primary">obg</name>
    <name type="ordered locus">UPA3_0480</name>
</gene>
<feature type="chain" id="PRO_0000386373" description="GTPase Obg">
    <location>
        <begin position="1"/>
        <end position="435"/>
    </location>
</feature>
<feature type="domain" description="Obg" evidence="3">
    <location>
        <begin position="1"/>
        <end position="159"/>
    </location>
</feature>
<feature type="domain" description="OBG-type G" evidence="1">
    <location>
        <begin position="160"/>
        <end position="329"/>
    </location>
</feature>
<feature type="domain" description="OCT" evidence="2">
    <location>
        <begin position="357"/>
        <end position="435"/>
    </location>
</feature>
<feature type="binding site" evidence="1">
    <location>
        <begin position="166"/>
        <end position="173"/>
    </location>
    <ligand>
        <name>GTP</name>
        <dbReference type="ChEBI" id="CHEBI:37565"/>
    </ligand>
</feature>
<feature type="binding site" evidence="1">
    <location>
        <position position="173"/>
    </location>
    <ligand>
        <name>Mg(2+)</name>
        <dbReference type="ChEBI" id="CHEBI:18420"/>
    </ligand>
</feature>
<feature type="binding site" evidence="1">
    <location>
        <begin position="191"/>
        <end position="195"/>
    </location>
    <ligand>
        <name>GTP</name>
        <dbReference type="ChEBI" id="CHEBI:37565"/>
    </ligand>
</feature>
<feature type="binding site" evidence="1">
    <location>
        <position position="193"/>
    </location>
    <ligand>
        <name>Mg(2+)</name>
        <dbReference type="ChEBI" id="CHEBI:18420"/>
    </ligand>
</feature>
<feature type="binding site" evidence="1">
    <location>
        <begin position="212"/>
        <end position="215"/>
    </location>
    <ligand>
        <name>GTP</name>
        <dbReference type="ChEBI" id="CHEBI:37565"/>
    </ligand>
</feature>
<feature type="binding site" evidence="1">
    <location>
        <begin position="282"/>
        <end position="285"/>
    </location>
    <ligand>
        <name>GTP</name>
        <dbReference type="ChEBI" id="CHEBI:37565"/>
    </ligand>
</feature>
<feature type="binding site" evidence="1">
    <location>
        <begin position="310"/>
        <end position="312"/>
    </location>
    <ligand>
        <name>GTP</name>
        <dbReference type="ChEBI" id="CHEBI:37565"/>
    </ligand>
</feature>
<organism>
    <name type="scientific">Ureaplasma parvum serovar 3 (strain ATCC 27815 / 27 / NCTC 11736)</name>
    <dbReference type="NCBI Taxonomy" id="505682"/>
    <lineage>
        <taxon>Bacteria</taxon>
        <taxon>Bacillati</taxon>
        <taxon>Mycoplasmatota</taxon>
        <taxon>Mycoplasmoidales</taxon>
        <taxon>Mycoplasmoidaceae</taxon>
        <taxon>Ureaplasma</taxon>
    </lineage>
</organism>
<dbReference type="EC" id="3.6.5.-" evidence="1"/>
<dbReference type="EMBL" id="CP000942">
    <property type="protein sequence ID" value="ACA32741.1"/>
    <property type="molecule type" value="Genomic_DNA"/>
</dbReference>
<dbReference type="SMR" id="B1AJA2"/>
<dbReference type="GeneID" id="29672770"/>
<dbReference type="KEGG" id="upa:UPA3_0480"/>
<dbReference type="HOGENOM" id="CLU_011747_2_1_14"/>
<dbReference type="Proteomes" id="UP000002162">
    <property type="component" value="Chromosome"/>
</dbReference>
<dbReference type="GO" id="GO:0005737">
    <property type="term" value="C:cytoplasm"/>
    <property type="evidence" value="ECO:0007669"/>
    <property type="project" value="UniProtKB-SubCell"/>
</dbReference>
<dbReference type="GO" id="GO:0005525">
    <property type="term" value="F:GTP binding"/>
    <property type="evidence" value="ECO:0007669"/>
    <property type="project" value="UniProtKB-UniRule"/>
</dbReference>
<dbReference type="GO" id="GO:0003924">
    <property type="term" value="F:GTPase activity"/>
    <property type="evidence" value="ECO:0007669"/>
    <property type="project" value="UniProtKB-UniRule"/>
</dbReference>
<dbReference type="GO" id="GO:0000287">
    <property type="term" value="F:magnesium ion binding"/>
    <property type="evidence" value="ECO:0007669"/>
    <property type="project" value="InterPro"/>
</dbReference>
<dbReference type="GO" id="GO:0042254">
    <property type="term" value="P:ribosome biogenesis"/>
    <property type="evidence" value="ECO:0007669"/>
    <property type="project" value="UniProtKB-UniRule"/>
</dbReference>
<dbReference type="CDD" id="cd01898">
    <property type="entry name" value="Obg"/>
    <property type="match status" value="1"/>
</dbReference>
<dbReference type="FunFam" id="2.70.210.12:FF:000001">
    <property type="entry name" value="GTPase Obg"/>
    <property type="match status" value="1"/>
</dbReference>
<dbReference type="Gene3D" id="3.30.300.350">
    <property type="entry name" value="GTP-binding protein OBG, C-terminal domain"/>
    <property type="match status" value="1"/>
</dbReference>
<dbReference type="Gene3D" id="2.70.210.12">
    <property type="entry name" value="GTP1/OBG domain"/>
    <property type="match status" value="1"/>
</dbReference>
<dbReference type="Gene3D" id="3.40.50.300">
    <property type="entry name" value="P-loop containing nucleotide triphosphate hydrolases"/>
    <property type="match status" value="1"/>
</dbReference>
<dbReference type="HAMAP" id="MF_01454">
    <property type="entry name" value="GTPase_Obg"/>
    <property type="match status" value="1"/>
</dbReference>
<dbReference type="InterPro" id="IPR031167">
    <property type="entry name" value="G_OBG"/>
</dbReference>
<dbReference type="InterPro" id="IPR006073">
    <property type="entry name" value="GTP-bd"/>
</dbReference>
<dbReference type="InterPro" id="IPR014100">
    <property type="entry name" value="GTP-bd_Obg/CgtA"/>
</dbReference>
<dbReference type="InterPro" id="IPR036346">
    <property type="entry name" value="GTP-bd_prot_GTP1/OBG_C_sf"/>
</dbReference>
<dbReference type="InterPro" id="IPR006074">
    <property type="entry name" value="GTP1-OBG_CS"/>
</dbReference>
<dbReference type="InterPro" id="IPR006169">
    <property type="entry name" value="GTP1_OBG_dom"/>
</dbReference>
<dbReference type="InterPro" id="IPR036726">
    <property type="entry name" value="GTP1_OBG_dom_sf"/>
</dbReference>
<dbReference type="InterPro" id="IPR045086">
    <property type="entry name" value="OBG_GTPase"/>
</dbReference>
<dbReference type="InterPro" id="IPR015349">
    <property type="entry name" value="OCT_dom"/>
</dbReference>
<dbReference type="InterPro" id="IPR027417">
    <property type="entry name" value="P-loop_NTPase"/>
</dbReference>
<dbReference type="InterPro" id="IPR005225">
    <property type="entry name" value="Small_GTP-bd"/>
</dbReference>
<dbReference type="NCBIfam" id="TIGR02729">
    <property type="entry name" value="Obg_CgtA"/>
    <property type="match status" value="1"/>
</dbReference>
<dbReference type="NCBIfam" id="TIGR03595">
    <property type="entry name" value="Obg_CgtA_exten"/>
    <property type="match status" value="1"/>
</dbReference>
<dbReference type="NCBIfam" id="NF008955">
    <property type="entry name" value="PRK12297.1"/>
    <property type="match status" value="1"/>
</dbReference>
<dbReference type="NCBIfam" id="NF008956">
    <property type="entry name" value="PRK12299.1"/>
    <property type="match status" value="1"/>
</dbReference>
<dbReference type="NCBIfam" id="TIGR00231">
    <property type="entry name" value="small_GTP"/>
    <property type="match status" value="1"/>
</dbReference>
<dbReference type="PANTHER" id="PTHR11702">
    <property type="entry name" value="DEVELOPMENTALLY REGULATED GTP-BINDING PROTEIN-RELATED"/>
    <property type="match status" value="1"/>
</dbReference>
<dbReference type="PANTHER" id="PTHR11702:SF31">
    <property type="entry name" value="MITOCHONDRIAL RIBOSOME-ASSOCIATED GTPASE 2"/>
    <property type="match status" value="1"/>
</dbReference>
<dbReference type="Pfam" id="PF09269">
    <property type="entry name" value="DUF1967"/>
    <property type="match status" value="1"/>
</dbReference>
<dbReference type="Pfam" id="PF01018">
    <property type="entry name" value="GTP1_OBG"/>
    <property type="match status" value="1"/>
</dbReference>
<dbReference type="Pfam" id="PF01926">
    <property type="entry name" value="MMR_HSR1"/>
    <property type="match status" value="1"/>
</dbReference>
<dbReference type="PIRSF" id="PIRSF002401">
    <property type="entry name" value="GTP_bd_Obg/CgtA"/>
    <property type="match status" value="1"/>
</dbReference>
<dbReference type="PRINTS" id="PR00326">
    <property type="entry name" value="GTP1OBG"/>
</dbReference>
<dbReference type="SUPFAM" id="SSF102741">
    <property type="entry name" value="Obg GTP-binding protein C-terminal domain"/>
    <property type="match status" value="1"/>
</dbReference>
<dbReference type="SUPFAM" id="SSF82051">
    <property type="entry name" value="Obg GTP-binding protein N-terminal domain"/>
    <property type="match status" value="1"/>
</dbReference>
<dbReference type="SUPFAM" id="SSF52540">
    <property type="entry name" value="P-loop containing nucleoside triphosphate hydrolases"/>
    <property type="match status" value="1"/>
</dbReference>
<dbReference type="PROSITE" id="PS51710">
    <property type="entry name" value="G_OBG"/>
    <property type="match status" value="1"/>
</dbReference>
<dbReference type="PROSITE" id="PS00905">
    <property type="entry name" value="GTP1_OBG"/>
    <property type="match status" value="1"/>
</dbReference>
<dbReference type="PROSITE" id="PS51883">
    <property type="entry name" value="OBG"/>
    <property type="match status" value="1"/>
</dbReference>
<dbReference type="PROSITE" id="PS51881">
    <property type="entry name" value="OCT"/>
    <property type="match status" value="1"/>
</dbReference>
<name>OBG_UREP2</name>